<accession>Q7N8R3</accession>
<comment type="catalytic activity">
    <reaction>
        <text>Preferential cleavage of bonds with hydrophobic residues in P1'.</text>
        <dbReference type="EC" id="3.4.24.40"/>
    </reaction>
</comment>
<comment type="cofactor">
    <cofactor evidence="1">
        <name>Zn(2+)</name>
        <dbReference type="ChEBI" id="CHEBI:29105"/>
    </cofactor>
    <text evidence="1">Binds 1 zinc ion per subunit.</text>
</comment>
<comment type="cofactor">
    <cofactor evidence="1">
        <name>Ca(2+)</name>
        <dbReference type="ChEBI" id="CHEBI:29108"/>
    </cofactor>
</comment>
<comment type="subcellular location">
    <subcellularLocation>
        <location evidence="1">Secreted</location>
    </subcellularLocation>
</comment>
<comment type="similarity">
    <text evidence="3">Belongs to the peptidase M10B family.</text>
</comment>
<sequence>MSLKKKISYSEDVSGSEKANELLKWLQAYIPGKDSNIVVEHEPSKDAAKELIRGDYRWGHQDDDKSKAFQLKYSFLESKPDNMPWHISEFSAFNEAQKAAAKLSIQSWADVANINFVETTDAKEANVTFGFFDVSLTGSYAFAYLPTPEKTQVGTWYNAKSRTFLNNDIDVNGYGRQTFTHEIGHTLGLQHPADYNASDKVSPTYKNSATYFEDSRAYTVMSYFGEKNTGQDFKGIYSSAPLLNDISAIQAVYGANNTIRADDTVYGFNSNTDRDFYTAKDENSKLLFTAWDTGGNDTFDFSGFTQDQRINLNEASFSDVGGLKGNVSIARGVTIENAIGGSGNDVLIGNDAANTLKGGAGDDIIYGGLGADNLWGGEGNDTFVYLSAKESPPLERDWIHDFVSGKDKIDVSLFDLGEAGKGGVKFVREFTGEVGEAVLRYNTVDKVNDFAINLGGEFSYDDFWVKIVGEPILESDFILS</sequence>
<dbReference type="EC" id="3.4.24.40"/>
<dbReference type="EMBL" id="BX571861">
    <property type="protein sequence ID" value="CAE12950.1"/>
    <property type="molecule type" value="Genomic_DNA"/>
</dbReference>
<dbReference type="SMR" id="Q7N8R3"/>
<dbReference type="STRING" id="243265.plu0655"/>
<dbReference type="MEROPS" id="M10.063"/>
<dbReference type="KEGG" id="plu:plu0655"/>
<dbReference type="eggNOG" id="COG2931">
    <property type="taxonomic scope" value="Bacteria"/>
</dbReference>
<dbReference type="HOGENOM" id="CLU_025059_1_1_6"/>
<dbReference type="OrthoDB" id="733404at2"/>
<dbReference type="Proteomes" id="UP000002514">
    <property type="component" value="Chromosome"/>
</dbReference>
<dbReference type="GO" id="GO:0005615">
    <property type="term" value="C:extracellular space"/>
    <property type="evidence" value="ECO:0007669"/>
    <property type="project" value="InterPro"/>
</dbReference>
<dbReference type="GO" id="GO:0005509">
    <property type="term" value="F:calcium ion binding"/>
    <property type="evidence" value="ECO:0007669"/>
    <property type="project" value="InterPro"/>
</dbReference>
<dbReference type="GO" id="GO:0004222">
    <property type="term" value="F:metalloendopeptidase activity"/>
    <property type="evidence" value="ECO:0007669"/>
    <property type="project" value="InterPro"/>
</dbReference>
<dbReference type="GO" id="GO:0008270">
    <property type="term" value="F:zinc ion binding"/>
    <property type="evidence" value="ECO:0007669"/>
    <property type="project" value="InterPro"/>
</dbReference>
<dbReference type="GO" id="GO:0030574">
    <property type="term" value="P:collagen catabolic process"/>
    <property type="evidence" value="ECO:0007669"/>
    <property type="project" value="TreeGrafter"/>
</dbReference>
<dbReference type="GO" id="GO:0030198">
    <property type="term" value="P:extracellular matrix organization"/>
    <property type="evidence" value="ECO:0007669"/>
    <property type="project" value="TreeGrafter"/>
</dbReference>
<dbReference type="GO" id="GO:0006508">
    <property type="term" value="P:proteolysis"/>
    <property type="evidence" value="ECO:0007669"/>
    <property type="project" value="UniProtKB-KW"/>
</dbReference>
<dbReference type="CDD" id="cd04277">
    <property type="entry name" value="ZnMc_serralysin_like"/>
    <property type="match status" value="1"/>
</dbReference>
<dbReference type="Gene3D" id="3.40.390.10">
    <property type="entry name" value="Collagenase (Catalytic Domain)"/>
    <property type="match status" value="1"/>
</dbReference>
<dbReference type="Gene3D" id="2.150.10.10">
    <property type="entry name" value="Serralysin-like metalloprotease, C-terminal"/>
    <property type="match status" value="1"/>
</dbReference>
<dbReference type="InterPro" id="IPR018511">
    <property type="entry name" value="Hemolysin-typ_Ca-bd_CS"/>
</dbReference>
<dbReference type="InterPro" id="IPR001343">
    <property type="entry name" value="Hemolysn_Ca-bd"/>
</dbReference>
<dbReference type="InterPro" id="IPR024079">
    <property type="entry name" value="MetalloPept_cat_dom_sf"/>
</dbReference>
<dbReference type="InterPro" id="IPR016294">
    <property type="entry name" value="Pept_M10B"/>
</dbReference>
<dbReference type="InterPro" id="IPR013858">
    <property type="entry name" value="Peptidase_M10B_C"/>
</dbReference>
<dbReference type="InterPro" id="IPR006026">
    <property type="entry name" value="Peptidase_Metallo"/>
</dbReference>
<dbReference type="InterPro" id="IPR034033">
    <property type="entry name" value="Serralysin-like"/>
</dbReference>
<dbReference type="InterPro" id="IPR011049">
    <property type="entry name" value="Serralysin-like_metalloprot_C"/>
</dbReference>
<dbReference type="NCBIfam" id="NF035945">
    <property type="entry name" value="Zn_serralysin"/>
    <property type="match status" value="1"/>
</dbReference>
<dbReference type="PANTHER" id="PTHR10201">
    <property type="entry name" value="MATRIX METALLOPROTEINASE"/>
    <property type="match status" value="1"/>
</dbReference>
<dbReference type="PANTHER" id="PTHR10201:SF294">
    <property type="entry name" value="MATRIX METALLOPROTEINASE 16"/>
    <property type="match status" value="1"/>
</dbReference>
<dbReference type="Pfam" id="PF00353">
    <property type="entry name" value="HemolysinCabind"/>
    <property type="match status" value="1"/>
</dbReference>
<dbReference type="Pfam" id="PF08548">
    <property type="entry name" value="Peptidase_M10_C"/>
    <property type="match status" value="1"/>
</dbReference>
<dbReference type="Pfam" id="PF13688">
    <property type="entry name" value="Reprolysin_5"/>
    <property type="match status" value="1"/>
</dbReference>
<dbReference type="PIRSF" id="PIRSF001205">
    <property type="entry name" value="Peptidase_M10B"/>
    <property type="match status" value="1"/>
</dbReference>
<dbReference type="PRINTS" id="PR00313">
    <property type="entry name" value="CABNDNGRPT"/>
</dbReference>
<dbReference type="SMART" id="SM00235">
    <property type="entry name" value="ZnMc"/>
    <property type="match status" value="1"/>
</dbReference>
<dbReference type="SUPFAM" id="SSF51120">
    <property type="entry name" value="beta-Roll"/>
    <property type="match status" value="1"/>
</dbReference>
<dbReference type="SUPFAM" id="SSF55486">
    <property type="entry name" value="Metalloproteases ('zincins'), catalytic domain"/>
    <property type="match status" value="1"/>
</dbReference>
<dbReference type="PROSITE" id="PS00330">
    <property type="entry name" value="HEMOLYSIN_CALCIUM"/>
    <property type="match status" value="1"/>
</dbReference>
<dbReference type="PROSITE" id="PS00142">
    <property type="entry name" value="ZINC_PROTEASE"/>
    <property type="match status" value="1"/>
</dbReference>
<name>PRTA_PHOLL</name>
<organism>
    <name type="scientific">Photorhabdus laumondii subsp. laumondii (strain DSM 15139 / CIP 105565 / TT01)</name>
    <name type="common">Photorhabdus luminescens subsp. laumondii</name>
    <dbReference type="NCBI Taxonomy" id="243265"/>
    <lineage>
        <taxon>Bacteria</taxon>
        <taxon>Pseudomonadati</taxon>
        <taxon>Pseudomonadota</taxon>
        <taxon>Gammaproteobacteria</taxon>
        <taxon>Enterobacterales</taxon>
        <taxon>Morganellaceae</taxon>
        <taxon>Photorhabdus</taxon>
    </lineage>
</organism>
<evidence type="ECO:0000250" key="1"/>
<evidence type="ECO:0000255" key="2">
    <source>
        <dbReference type="PROSITE-ProRule" id="PRU10095"/>
    </source>
</evidence>
<evidence type="ECO:0000305" key="3"/>
<gene>
    <name type="primary">prtA</name>
    <name type="ordered locus">plu0655</name>
</gene>
<proteinExistence type="inferred from homology"/>
<protein>
    <recommendedName>
        <fullName>Serralysin</fullName>
        <ecNumber>3.4.24.40</ecNumber>
    </recommendedName>
    <alternativeName>
        <fullName>Secreted alkaline metalloproteinase</fullName>
    </alternativeName>
</protein>
<feature type="chain" id="PRO_0000078178" description="Serralysin">
    <location>
        <begin position="1"/>
        <end position="480"/>
    </location>
</feature>
<feature type="repeat" description="Hemolysin-type calcium-binding 1">
    <location>
        <begin position="339"/>
        <end position="356"/>
    </location>
</feature>
<feature type="repeat" description="Hemolysin-type calcium-binding 2">
    <location>
        <begin position="357"/>
        <end position="374"/>
    </location>
</feature>
<feature type="active site" evidence="2">
    <location>
        <position position="182"/>
    </location>
</feature>
<feature type="binding site" evidence="2">
    <location>
        <position position="181"/>
    </location>
    <ligand>
        <name>Zn(2+)</name>
        <dbReference type="ChEBI" id="CHEBI:29105"/>
        <note>catalytic</note>
    </ligand>
</feature>
<feature type="binding site" evidence="2">
    <location>
        <position position="185"/>
    </location>
    <ligand>
        <name>Zn(2+)</name>
        <dbReference type="ChEBI" id="CHEBI:29105"/>
        <note>catalytic</note>
    </ligand>
</feature>
<feature type="binding site" evidence="2">
    <location>
        <position position="191"/>
    </location>
    <ligand>
        <name>Zn(2+)</name>
        <dbReference type="ChEBI" id="CHEBI:29105"/>
        <note>catalytic</note>
    </ligand>
</feature>
<feature type="binding site" evidence="1">
    <location>
        <position position="260"/>
    </location>
    <ligand>
        <name>Ca(2+)</name>
        <dbReference type="ChEBI" id="CHEBI:29108"/>
        <label>1</label>
    </ligand>
</feature>
<feature type="binding site" evidence="1">
    <location>
        <position position="263"/>
    </location>
    <ligand>
        <name>Ca(2+)</name>
        <dbReference type="ChEBI" id="CHEBI:29108"/>
        <label>1</label>
    </ligand>
</feature>
<feature type="binding site" evidence="1">
    <location>
        <position position="292"/>
    </location>
    <ligand>
        <name>Ca(2+)</name>
        <dbReference type="ChEBI" id="CHEBI:29108"/>
        <label>1</label>
    </ligand>
</feature>
<feature type="binding site" evidence="1">
    <location>
        <position position="294"/>
    </location>
    <ligand>
        <name>Ca(2+)</name>
        <dbReference type="ChEBI" id="CHEBI:29108"/>
        <label>1</label>
    </ligand>
</feature>
<feature type="binding site" evidence="1">
    <location>
        <position position="295"/>
    </location>
    <ligand>
        <name>Ca(2+)</name>
        <dbReference type="ChEBI" id="CHEBI:29108"/>
        <label>2</label>
    </ligand>
</feature>
<feature type="binding site" evidence="1">
    <location>
        <position position="297"/>
    </location>
    <ligand>
        <name>Ca(2+)</name>
        <dbReference type="ChEBI" id="CHEBI:29108"/>
        <label>1</label>
    </ligand>
</feature>
<feature type="binding site" evidence="1">
    <location>
        <position position="297"/>
    </location>
    <ligand>
        <name>Ca(2+)</name>
        <dbReference type="ChEBI" id="CHEBI:29108"/>
        <label>2</label>
    </ligand>
</feature>
<feature type="binding site" evidence="1">
    <location>
        <position position="334"/>
    </location>
    <ligand>
        <name>Ca(2+)</name>
        <dbReference type="ChEBI" id="CHEBI:29108"/>
        <label>2</label>
    </ligand>
</feature>
<feature type="binding site" evidence="1">
    <location>
        <position position="336"/>
    </location>
    <ligand>
        <name>Ca(2+)</name>
        <dbReference type="ChEBI" id="CHEBI:29108"/>
        <label>2</label>
    </ligand>
</feature>
<keyword id="KW-0106">Calcium</keyword>
<keyword id="KW-0378">Hydrolase</keyword>
<keyword id="KW-0479">Metal-binding</keyword>
<keyword id="KW-0482">Metalloprotease</keyword>
<keyword id="KW-0645">Protease</keyword>
<keyword id="KW-1185">Reference proteome</keyword>
<keyword id="KW-0677">Repeat</keyword>
<keyword id="KW-0964">Secreted</keyword>
<keyword id="KW-0862">Zinc</keyword>
<reference key="1">
    <citation type="journal article" date="2003" name="Nat. Biotechnol.">
        <title>The genome sequence of the entomopathogenic bacterium Photorhabdus luminescens.</title>
        <authorList>
            <person name="Duchaud E."/>
            <person name="Rusniok C."/>
            <person name="Frangeul L."/>
            <person name="Buchrieser C."/>
            <person name="Givaudan A."/>
            <person name="Taourit S."/>
            <person name="Bocs S."/>
            <person name="Boursaux-Eude C."/>
            <person name="Chandler M."/>
            <person name="Charles J.-F."/>
            <person name="Dassa E."/>
            <person name="Derose R."/>
            <person name="Derzelle S."/>
            <person name="Freyssinet G."/>
            <person name="Gaudriault S."/>
            <person name="Medigue C."/>
            <person name="Lanois A."/>
            <person name="Powell K."/>
            <person name="Siguier P."/>
            <person name="Vincent R."/>
            <person name="Wingate V."/>
            <person name="Zouine M."/>
            <person name="Glaser P."/>
            <person name="Boemare N."/>
            <person name="Danchin A."/>
            <person name="Kunst F."/>
        </authorList>
    </citation>
    <scope>NUCLEOTIDE SEQUENCE [LARGE SCALE GENOMIC DNA]</scope>
    <source>
        <strain>DSM 15139 / CIP 105565 / TT01</strain>
    </source>
</reference>